<feature type="initiator methionine" description="Removed" evidence="2">
    <location>
        <position position="1"/>
    </location>
</feature>
<feature type="chain" id="PRO_0000358593" description="Keratin-associated protein 3-1" evidence="2">
    <location>
        <begin position="2"/>
        <end position="98"/>
    </location>
</feature>
<feature type="repeat" description="1" evidence="4">
    <location>
        <begin position="3"/>
        <end position="7"/>
    </location>
</feature>
<feature type="repeat" description="2" evidence="4">
    <location>
        <begin position="8"/>
        <end position="12"/>
    </location>
</feature>
<feature type="repeat" description="3" evidence="4">
    <location>
        <begin position="47"/>
        <end position="51"/>
    </location>
</feature>
<feature type="repeat" description="4" evidence="4">
    <location>
        <begin position="55"/>
        <end position="59"/>
    </location>
</feature>
<feature type="region of interest" description="4 X 5 AA repeats of C-C-X(3)" evidence="4">
    <location>
        <begin position="3"/>
        <end position="59"/>
    </location>
</feature>
<feature type="modified residue" description="N-acetylalanine" evidence="2">
    <location>
        <position position="2"/>
    </location>
</feature>
<accession>Q24JX8</accession>
<keyword id="KW-0007">Acetylation</keyword>
<keyword id="KW-0416">Keratin</keyword>
<keyword id="KW-1185">Reference proteome</keyword>
<keyword id="KW-0677">Repeat</keyword>
<proteinExistence type="inferred from homology"/>
<evidence type="ECO:0000250" key="1"/>
<evidence type="ECO:0000250" key="2">
    <source>
        <dbReference type="UniProtKB" id="P02447"/>
    </source>
</evidence>
<evidence type="ECO:0000250" key="3">
    <source>
        <dbReference type="UniProtKB" id="Q9BYR8"/>
    </source>
</evidence>
<evidence type="ECO:0000255" key="4"/>
<evidence type="ECO:0000312" key="5">
    <source>
        <dbReference type="EMBL" id="AAI14206.1"/>
    </source>
</evidence>
<reference evidence="5" key="1">
    <citation type="submission" date="2006-02" db="EMBL/GenBank/DDBJ databases">
        <authorList>
            <consortium name="NIH - Mammalian Gene Collection (MGC) project"/>
        </authorList>
    </citation>
    <scope>NUCLEOTIDE SEQUENCE [LARGE SCALE MRNA]</scope>
    <source>
        <strain evidence="5">Hereford</strain>
        <tissue evidence="5">Fetal skin</tissue>
    </source>
</reference>
<gene>
    <name evidence="5" type="primary">KRTAP3-1</name>
</gene>
<protein>
    <recommendedName>
        <fullName evidence="5">Keratin-associated protein 3-1</fullName>
    </recommendedName>
</protein>
<name>KRA31_BOVIN</name>
<dbReference type="EMBL" id="BC114205">
    <property type="protein sequence ID" value="AAI14206.1"/>
    <property type="molecule type" value="mRNA"/>
</dbReference>
<dbReference type="RefSeq" id="NP_001070572.1">
    <property type="nucleotide sequence ID" value="NM_001077104.1"/>
</dbReference>
<dbReference type="FunCoup" id="Q24JX8">
    <property type="interactions" value="12"/>
</dbReference>
<dbReference type="STRING" id="9913.ENSBTAP00000054573"/>
<dbReference type="PaxDb" id="9913-ENSBTAP00000054573"/>
<dbReference type="GeneID" id="768046"/>
<dbReference type="KEGG" id="bta:768046"/>
<dbReference type="CTD" id="83896"/>
<dbReference type="eggNOG" id="KOG4726">
    <property type="taxonomic scope" value="Eukaryota"/>
</dbReference>
<dbReference type="InParanoid" id="Q24JX8"/>
<dbReference type="OrthoDB" id="9446518at2759"/>
<dbReference type="Proteomes" id="UP000009136">
    <property type="component" value="Unplaced"/>
</dbReference>
<dbReference type="GO" id="GO:0005829">
    <property type="term" value="C:cytosol"/>
    <property type="evidence" value="ECO:0007669"/>
    <property type="project" value="UniProtKB-ARBA"/>
</dbReference>
<dbReference type="GO" id="GO:0045095">
    <property type="term" value="C:keratin filament"/>
    <property type="evidence" value="ECO:0007669"/>
    <property type="project" value="InterPro"/>
</dbReference>
<dbReference type="GO" id="GO:0005198">
    <property type="term" value="F:structural molecule activity"/>
    <property type="evidence" value="ECO:0007669"/>
    <property type="project" value="InterPro"/>
</dbReference>
<dbReference type="InterPro" id="IPR007659">
    <property type="entry name" value="Keratin_matx"/>
</dbReference>
<dbReference type="PANTHER" id="PTHR23260">
    <property type="entry name" value="KERATIN ASSOCIATED PROTEIN 3-3-RELATED"/>
    <property type="match status" value="1"/>
</dbReference>
<dbReference type="PANTHER" id="PTHR23260:SF3">
    <property type="entry name" value="KERATIN-ASSOCIATED PROTEIN 3-1"/>
    <property type="match status" value="1"/>
</dbReference>
<dbReference type="Pfam" id="PF04579">
    <property type="entry name" value="Keratin_matx"/>
    <property type="match status" value="1"/>
</dbReference>
<sequence length="98" mass="10408">MAYCAPYCCSVPTGPATTICSSDKFCRCGVCLPSTCPHEISLLQPTCCDNCPPPCCVPDTYVPTCWLLNSSHPTPGLSGINLTTFVQPGCDNVCEPRC</sequence>
<organism>
    <name type="scientific">Bos taurus</name>
    <name type="common">Bovine</name>
    <dbReference type="NCBI Taxonomy" id="9913"/>
    <lineage>
        <taxon>Eukaryota</taxon>
        <taxon>Metazoa</taxon>
        <taxon>Chordata</taxon>
        <taxon>Craniata</taxon>
        <taxon>Vertebrata</taxon>
        <taxon>Euteleostomi</taxon>
        <taxon>Mammalia</taxon>
        <taxon>Eutheria</taxon>
        <taxon>Laurasiatheria</taxon>
        <taxon>Artiodactyla</taxon>
        <taxon>Ruminantia</taxon>
        <taxon>Pecora</taxon>
        <taxon>Bovidae</taxon>
        <taxon>Bovinae</taxon>
        <taxon>Bos</taxon>
    </lineage>
</organism>
<comment type="function">
    <text evidence="1">In the hair cortex, hair keratin intermediate filaments are embedded in an interfilamentous matrix, consisting of hair keratin-associated proteins (KRTAP), which are essential for the formation of a rigid and resistant hair shaft through their extensive disulfide bond cross-linking with abundant cysteine residues of hair keratins. The matrix proteins include the high-sulfur and high-glycine-tyrosine keratins (By similarity).</text>
</comment>
<comment type="subunit">
    <text evidence="1">Interacts with hair keratins.</text>
</comment>
<comment type="similarity">
    <text evidence="3">Belongs to the KRTAP type 3 family.</text>
</comment>